<evidence type="ECO:0000255" key="1">
    <source>
        <dbReference type="HAMAP-Rule" id="MF_01538"/>
    </source>
</evidence>
<dbReference type="EMBL" id="AE017194">
    <property type="protein sequence ID" value="AAS41254.1"/>
    <property type="molecule type" value="Genomic_DNA"/>
</dbReference>
<dbReference type="SMR" id="Q738Q8"/>
<dbReference type="KEGG" id="bca:BCE_2336"/>
<dbReference type="HOGENOM" id="CLU_177534_0_0_9"/>
<dbReference type="Proteomes" id="UP000002527">
    <property type="component" value="Chromosome"/>
</dbReference>
<dbReference type="Gene3D" id="1.10.150.260">
    <property type="entry name" value="YozE SAM-like"/>
    <property type="match status" value="1"/>
</dbReference>
<dbReference type="HAMAP" id="MF_01538">
    <property type="entry name" value="UPF0346"/>
    <property type="match status" value="1"/>
</dbReference>
<dbReference type="InterPro" id="IPR010673">
    <property type="entry name" value="UPF0346"/>
</dbReference>
<dbReference type="InterPro" id="IPR023089">
    <property type="entry name" value="YozE_SAM-like"/>
</dbReference>
<dbReference type="InterPro" id="IPR036806">
    <property type="entry name" value="YozE_SAM-like_sf"/>
</dbReference>
<dbReference type="NCBIfam" id="NF010193">
    <property type="entry name" value="PRK13672.1"/>
    <property type="match status" value="1"/>
</dbReference>
<dbReference type="Pfam" id="PF06855">
    <property type="entry name" value="YozE_SAM_like"/>
    <property type="match status" value="1"/>
</dbReference>
<dbReference type="PIRSF" id="PIRSF037262">
    <property type="entry name" value="UCP037262"/>
    <property type="match status" value="1"/>
</dbReference>
<dbReference type="SUPFAM" id="SSF140652">
    <property type="entry name" value="YozE-like"/>
    <property type="match status" value="1"/>
</dbReference>
<comment type="similarity">
    <text evidence="1">Belongs to the UPF0346 family.</text>
</comment>
<organism>
    <name type="scientific">Bacillus cereus (strain ATCC 10987 / NRS 248)</name>
    <dbReference type="NCBI Taxonomy" id="222523"/>
    <lineage>
        <taxon>Bacteria</taxon>
        <taxon>Bacillati</taxon>
        <taxon>Bacillota</taxon>
        <taxon>Bacilli</taxon>
        <taxon>Bacillales</taxon>
        <taxon>Bacillaceae</taxon>
        <taxon>Bacillus</taxon>
        <taxon>Bacillus cereus group</taxon>
    </lineage>
</organism>
<protein>
    <recommendedName>
        <fullName evidence="1">UPF0346 protein BCE_2336</fullName>
    </recommendedName>
</protein>
<accession>Q738Q8</accession>
<feature type="chain" id="PRO_0000164265" description="UPF0346 protein BCE_2336">
    <location>
        <begin position="1"/>
        <end position="71"/>
    </location>
</feature>
<name>Y2336_BACC1</name>
<gene>
    <name type="ordered locus">BCE_2336</name>
</gene>
<sequence>MKKTFYHYMMKHRAALFSNEISNLAEAMYDDLSFPKQSEDYDEISSYLELSGMLASMSIFDEAWELYIQDR</sequence>
<proteinExistence type="inferred from homology"/>
<reference key="1">
    <citation type="journal article" date="2004" name="Nucleic Acids Res.">
        <title>The genome sequence of Bacillus cereus ATCC 10987 reveals metabolic adaptations and a large plasmid related to Bacillus anthracis pXO1.</title>
        <authorList>
            <person name="Rasko D.A."/>
            <person name="Ravel J."/>
            <person name="Oekstad O.A."/>
            <person name="Helgason E."/>
            <person name="Cer R.Z."/>
            <person name="Jiang L."/>
            <person name="Shores K.A."/>
            <person name="Fouts D.E."/>
            <person name="Tourasse N.J."/>
            <person name="Angiuoli S.V."/>
            <person name="Kolonay J.F."/>
            <person name="Nelson W.C."/>
            <person name="Kolstoe A.-B."/>
            <person name="Fraser C.M."/>
            <person name="Read T.D."/>
        </authorList>
    </citation>
    <scope>NUCLEOTIDE SEQUENCE [LARGE SCALE GENOMIC DNA]</scope>
    <source>
        <strain>ATCC 10987 / NRS 248</strain>
    </source>
</reference>